<organism>
    <name type="scientific">Mycobacterium tuberculosis (strain ATCC 25618 / H37Rv)</name>
    <dbReference type="NCBI Taxonomy" id="83332"/>
    <lineage>
        <taxon>Bacteria</taxon>
        <taxon>Bacillati</taxon>
        <taxon>Actinomycetota</taxon>
        <taxon>Actinomycetes</taxon>
        <taxon>Mycobacteriales</taxon>
        <taxon>Mycobacteriaceae</taxon>
        <taxon>Mycobacterium</taxon>
        <taxon>Mycobacterium tuberculosis complex</taxon>
    </lineage>
</organism>
<reference evidence="8" key="1">
    <citation type="journal article" date="1998" name="Nature">
        <title>Deciphering the biology of Mycobacterium tuberculosis from the complete genome sequence.</title>
        <authorList>
            <person name="Cole S.T."/>
            <person name="Brosch R."/>
            <person name="Parkhill J."/>
            <person name="Garnier T."/>
            <person name="Churcher C.M."/>
            <person name="Harris D.E."/>
            <person name="Gordon S.V."/>
            <person name="Eiglmeier K."/>
            <person name="Gas S."/>
            <person name="Barry C.E. III"/>
            <person name="Tekaia F."/>
            <person name="Badcock K."/>
            <person name="Basham D."/>
            <person name="Brown D."/>
            <person name="Chillingworth T."/>
            <person name="Connor R."/>
            <person name="Davies R.M."/>
            <person name="Devlin K."/>
            <person name="Feltwell T."/>
            <person name="Gentles S."/>
            <person name="Hamlin N."/>
            <person name="Holroyd S."/>
            <person name="Hornsby T."/>
            <person name="Jagels K."/>
            <person name="Krogh A."/>
            <person name="McLean J."/>
            <person name="Moule S."/>
            <person name="Murphy L.D."/>
            <person name="Oliver S."/>
            <person name="Osborne J."/>
            <person name="Quail M.A."/>
            <person name="Rajandream M.A."/>
            <person name="Rogers J."/>
            <person name="Rutter S."/>
            <person name="Seeger K."/>
            <person name="Skelton S."/>
            <person name="Squares S."/>
            <person name="Squares R."/>
            <person name="Sulston J.E."/>
            <person name="Taylor K."/>
            <person name="Whitehead S."/>
            <person name="Barrell B.G."/>
        </authorList>
    </citation>
    <scope>NUCLEOTIDE SEQUENCE [LARGE SCALE GENOMIC DNA]</scope>
    <source>
        <strain>ATCC 25618 / H37Rv</strain>
    </source>
</reference>
<reference key="2">
    <citation type="journal article" date="2003" name="Proc. Natl. Acad. Sci. U.S.A.">
        <title>Genetic requirements for mycobacterial survival during infection.</title>
        <authorList>
            <person name="Sassetti C.M."/>
            <person name="Rubin E.J."/>
        </authorList>
    </citation>
    <scope>DISRUPTION PHENOTYPE</scope>
    <source>
        <strain>ATCC 25618 / H37Rv</strain>
    </source>
</reference>
<reference evidence="9" key="3">
    <citation type="journal article" date="2011" name="Mol. Cell. Proteomics">
        <title>Proteogenomic analysis of Mycobacterium tuberculosis by high resolution mass spectrometry.</title>
        <authorList>
            <person name="Kelkar D.S."/>
            <person name="Kumar D."/>
            <person name="Kumar P."/>
            <person name="Balakrishnan L."/>
            <person name="Muthusamy B."/>
            <person name="Yadav A.K."/>
            <person name="Shrivastava P."/>
            <person name="Marimuthu A."/>
            <person name="Anand S."/>
            <person name="Sundaram H."/>
            <person name="Kingsbury R."/>
            <person name="Harsha H.C."/>
            <person name="Nair B."/>
            <person name="Prasad T.S."/>
            <person name="Chauhan D.S."/>
            <person name="Katoch K."/>
            <person name="Katoch V.M."/>
            <person name="Kumar P."/>
            <person name="Chaerkady R."/>
            <person name="Ramachandran S."/>
            <person name="Dash D."/>
            <person name="Pandey A."/>
        </authorList>
    </citation>
    <scope>IDENTIFICATION BY MASS SPECTROMETRY [LARGE SCALE ANALYSIS]</scope>
    <source>
        <strain>ATCC 25618 / H37Rv</strain>
    </source>
</reference>
<reference key="4">
    <citation type="journal article" date="2011" name="PLoS Pathog.">
        <title>High-resolution phenotypic profiling defines genes essential for mycobacterial growth and cholesterol catabolism.</title>
        <authorList>
            <person name="Griffin J.E."/>
            <person name="Gawronski J.D."/>
            <person name="Dejesus M.A."/>
            <person name="Ioerger T.R."/>
            <person name="Akerley B.J."/>
            <person name="Sassetti C.M."/>
        </authorList>
    </citation>
    <scope>DISRUPTION PHENOTYPE</scope>
    <source>
        <strain>ATCC 25618 / H37Rv</strain>
    </source>
</reference>
<reference key="5">
    <citation type="journal article" date="2021" name="ACS Infect. Dis.">
        <title>Enzymatic beta-Oxidation of the Cholesterol Side Chain in Mycobacterium tuberculosis Bifurcates Stereospecifically at Hydration of 3-Oxo-cholest-4,22-dien-24-oyl-CoA.</title>
        <authorList>
            <person name="Yuan T."/>
            <person name="Werman J.M."/>
            <person name="Yin X."/>
            <person name="Yang M."/>
            <person name="Garcia-Diaz M."/>
            <person name="Sampson N.S."/>
        </authorList>
    </citation>
    <scope>FUNCTION</scope>
    <scope>CATALYTIC ACTIVITY</scope>
    <scope>PROBABLE ACTIVE SITES</scope>
    <scope>BIOPHYSICOCHEMICAL PROPERTIES</scope>
    <scope>PATHWAY</scope>
    <scope>SUBUNIT</scope>
    <scope>STEREOSPECIFIC PRODUCT</scope>
    <source>
        <strain>H37Rv</strain>
    </source>
</reference>
<dbReference type="EC" id="4.2.1.-" evidence="4"/>
<dbReference type="EMBL" id="AL123456">
    <property type="protein sequence ID" value="CCP46360.1"/>
    <property type="molecule type" value="Genomic_DNA"/>
</dbReference>
<dbReference type="RefSeq" id="WP_003419285.1">
    <property type="nucleotide sequence ID" value="NZ_NVQJ01000014.1"/>
</dbReference>
<dbReference type="RefSeq" id="YP_177986.1">
    <property type="nucleotide sequence ID" value="NC_000962.3"/>
</dbReference>
<dbReference type="SMR" id="Q6MWW2"/>
<dbReference type="FunCoup" id="Q6MWW2">
    <property type="interactions" value="74"/>
</dbReference>
<dbReference type="STRING" id="83332.Rv3538"/>
<dbReference type="PaxDb" id="83332-Rv3538"/>
<dbReference type="DNASU" id="888426"/>
<dbReference type="GeneID" id="888426"/>
<dbReference type="KEGG" id="mtu:Rv3538"/>
<dbReference type="KEGG" id="mtv:RVBD_3538"/>
<dbReference type="PATRIC" id="fig|83332.111.peg.3943"/>
<dbReference type="TubercuList" id="Rv3538"/>
<dbReference type="eggNOG" id="COG2030">
    <property type="taxonomic scope" value="Bacteria"/>
</dbReference>
<dbReference type="InParanoid" id="Q6MWW2"/>
<dbReference type="OrthoDB" id="5522043at2"/>
<dbReference type="PhylomeDB" id="Q6MWW2"/>
<dbReference type="UniPathway" id="UPA01058"/>
<dbReference type="Proteomes" id="UP000001584">
    <property type="component" value="Chromosome"/>
</dbReference>
<dbReference type="GO" id="GO:0005886">
    <property type="term" value="C:plasma membrane"/>
    <property type="evidence" value="ECO:0007005"/>
    <property type="project" value="MTBBASE"/>
</dbReference>
<dbReference type="GO" id="GO:0044594">
    <property type="term" value="F:17-beta-hydroxysteroid dehydrogenase (NAD+) activity"/>
    <property type="evidence" value="ECO:0000318"/>
    <property type="project" value="GO_Central"/>
</dbReference>
<dbReference type="GO" id="GO:0003857">
    <property type="term" value="F:3-hydroxyacyl-CoA dehydrogenase activity"/>
    <property type="evidence" value="ECO:0000318"/>
    <property type="project" value="GO_Central"/>
</dbReference>
<dbReference type="GO" id="GO:0004300">
    <property type="term" value="F:enoyl-CoA hydratase activity"/>
    <property type="evidence" value="ECO:0000318"/>
    <property type="project" value="GO_Central"/>
</dbReference>
<dbReference type="GO" id="GO:0006707">
    <property type="term" value="P:cholesterol catabolic process"/>
    <property type="evidence" value="ECO:0007669"/>
    <property type="project" value="UniProtKB-UniPathway"/>
</dbReference>
<dbReference type="GO" id="GO:0006635">
    <property type="term" value="P:fatty acid beta-oxidation"/>
    <property type="evidence" value="ECO:0000318"/>
    <property type="project" value="GO_Central"/>
</dbReference>
<dbReference type="CDD" id="cd03448">
    <property type="entry name" value="HDE_HSD"/>
    <property type="match status" value="1"/>
</dbReference>
<dbReference type="FunFam" id="3.10.129.10:FF:000061">
    <property type="entry name" value="Probable dehydrogenase"/>
    <property type="match status" value="1"/>
</dbReference>
<dbReference type="Gene3D" id="3.10.129.10">
    <property type="entry name" value="Hotdog Thioesterase"/>
    <property type="match status" value="1"/>
</dbReference>
<dbReference type="InterPro" id="IPR029069">
    <property type="entry name" value="HotDog_dom_sf"/>
</dbReference>
<dbReference type="InterPro" id="IPR002539">
    <property type="entry name" value="MaoC-like_dom"/>
</dbReference>
<dbReference type="InterPro" id="IPR054357">
    <property type="entry name" value="MFE-2_N"/>
</dbReference>
<dbReference type="PANTHER" id="PTHR13078:SF59">
    <property type="entry name" value="ENOYL-COA HYDRATASE CHSH3"/>
    <property type="match status" value="1"/>
</dbReference>
<dbReference type="PANTHER" id="PTHR13078">
    <property type="entry name" value="PEROXISOMAL MULTIFUNCTIONAL ENZYME TYPE 2-RELATED"/>
    <property type="match status" value="1"/>
</dbReference>
<dbReference type="Pfam" id="PF01575">
    <property type="entry name" value="MaoC_dehydratas"/>
    <property type="match status" value="1"/>
</dbReference>
<dbReference type="Pfam" id="PF22622">
    <property type="entry name" value="MFE-2_hydrat-2_N"/>
    <property type="match status" value="1"/>
</dbReference>
<dbReference type="SUPFAM" id="SSF54637">
    <property type="entry name" value="Thioesterase/thiol ester dehydrase-isomerase"/>
    <property type="match status" value="2"/>
</dbReference>
<gene>
    <name evidence="5" type="primary">chsH3</name>
    <name evidence="8" type="ordered locus">Rv3538</name>
</gene>
<comment type="function">
    <text evidence="4">Degradation of the cholesterol side chain involves 3 multistep beta-oxidation cycles, this is involved in the second cycle. Hydrates bulky steroid enoyl-CoA esters, has highest activity with 3-OCDO-CoA (3-oxochol-4,22-dien-24-oyl-CoA) making (22S)-HOCO-CoA, followed by octenoyl-CoA, with weaker activity on 3-OCDS-CoA (3-oxocholest-4,24-dien-26-oyl-CoA) and none on 3-OPDC-CoA (3-oxo-pregna-4,17-diene-20- carboxyl-CoA). Hydrates the same substrate as EchA19, but the 2 enzymes make different stereoisomers of the product.</text>
</comment>
<comment type="catalytic activity">
    <reaction evidence="4">
        <text>(22E)-3-oxochola-4,22-dien-24-oyl-CoA + H2O = (22S)-hydroxy-3-oxo-chol-4-ene-24-oyl-CoA</text>
        <dbReference type="Rhea" id="RHEA:72579"/>
        <dbReference type="ChEBI" id="CHEBI:15377"/>
        <dbReference type="ChEBI" id="CHEBI:136759"/>
        <dbReference type="ChEBI" id="CHEBI:192468"/>
    </reaction>
</comment>
<comment type="biophysicochemical properties">
    <kinetics>
        <KM evidence="4">55 uM for 3-OCDO-CoA</KM>
        <KM evidence="4">112 uM for octenoyl-CoA</KM>
        <KM evidence="4">12 uM for 3-OCDS-CoA</KM>
        <text evidence="4">kcat is 113 sec(-1) with 3-OCDO-CoA as substrate. kcat is 164 sec(-1) with octenoyl-CoA as substrate. kcat is 1.5 sec(-1) with 3-OCDS-CoA as substrate.</text>
    </kinetics>
</comment>
<comment type="pathway">
    <text evidence="4">Steroid metabolism; cholesterol degradation.</text>
</comment>
<comment type="subunit">
    <text evidence="4">Homodimer.</text>
</comment>
<comment type="disruption phenotype">
    <text evidence="2 3">Not required for growth in a mouse tuberculosis model (PubMed:14569030). Required for growth on cholesterol (PubMed:21980284).</text>
</comment>
<comment type="similarity">
    <text evidence="6">Belongs to the enoyl-CoA hydratase/isomerase family.</text>
</comment>
<proteinExistence type="evidence at protein level"/>
<name>CHSH3_MYCTU</name>
<keyword id="KW-0153">Cholesterol metabolism</keyword>
<keyword id="KW-0442">Lipid degradation</keyword>
<keyword id="KW-0443">Lipid metabolism</keyword>
<keyword id="KW-0456">Lyase</keyword>
<keyword id="KW-1185">Reference proteome</keyword>
<keyword id="KW-0753">Steroid metabolism</keyword>
<keyword id="KW-1207">Sterol metabolism</keyword>
<accession>Q6MWW2</accession>
<accession>F2GEP8</accession>
<accession>I6X7L2</accession>
<evidence type="ECO:0000255" key="1"/>
<evidence type="ECO:0000269" key="2">
    <source>
    </source>
</evidence>
<evidence type="ECO:0000269" key="3">
    <source>
    </source>
</evidence>
<evidence type="ECO:0000269" key="4">
    <source>
    </source>
</evidence>
<evidence type="ECO:0000303" key="5">
    <source>
    </source>
</evidence>
<evidence type="ECO:0000305" key="6"/>
<evidence type="ECO:0000305" key="7">
    <source>
    </source>
</evidence>
<evidence type="ECO:0000312" key="8">
    <source>
        <dbReference type="EMBL" id="CCP46360.1"/>
    </source>
</evidence>
<evidence type="ECO:0007744" key="9">
    <source>
    </source>
</evidence>
<protein>
    <recommendedName>
        <fullName evidence="5">Enoyl-CoA hydratase ChsH3</fullName>
        <ecNumber evidence="4">4.2.1.-</ecNumber>
    </recommendedName>
</protein>
<sequence length="286" mass="30216">MPIDLDVALGAQLPPVEFSWTSTDVQLYQLGLGAGSDPMNPRELSYLADDTPQVLPTFGNVAATFHLTTPPTVQFPGIDIELSKVLHASERVEVPAPLPPSGSARAVTRFTDIWDKGKAAVICSETTATTPDGLLLWTQKRSIYARGEGGFGGKRGPSGSDVAPERAPDLQVAMPILPQQALLYRLCGDRNPLHSDPEFAAAAGFPRPILHGLCTYGMTCKAIVDALLDSDATAVAGYGARFAGVAYPGETLTVNVWKDGRRLVASVVAPTRDNAVVLSGVELVPA</sequence>
<feature type="chain" id="PRO_0000456534" description="Enoyl-CoA hydratase ChsH3">
    <location>
        <begin position="1"/>
        <end position="286"/>
    </location>
</feature>
<feature type="domain" description="MaoC-like" evidence="1">
    <location>
        <begin position="163"/>
        <end position="271"/>
    </location>
</feature>
<feature type="active site" evidence="7">
    <location>
        <position position="189"/>
    </location>
</feature>
<feature type="active site" evidence="7">
    <location>
        <position position="194"/>
    </location>
</feature>